<proteinExistence type="evidence at protein level"/>
<reference key="1">
    <citation type="journal article" date="2005" name="Genetics">
        <title>Sequence finishing and gene mapping for Candida albicans chromosome 7 and syntenic analysis against the Saccharomyces cerevisiae genome.</title>
        <authorList>
            <person name="Chibana H."/>
            <person name="Oka N."/>
            <person name="Nakayama H."/>
            <person name="Aoyama T."/>
            <person name="Magee B.B."/>
            <person name="Magee P.T."/>
            <person name="Mikami Y."/>
        </authorList>
    </citation>
    <scope>NUCLEOTIDE SEQUENCE [LARGE SCALE GENOMIC DNA]</scope>
    <source>
        <strain>SC5314 / ATCC MYA-2876</strain>
    </source>
</reference>
<reference key="2">
    <citation type="journal article" date="2004" name="Proc. Natl. Acad. Sci. U.S.A.">
        <title>The diploid genome sequence of Candida albicans.</title>
        <authorList>
            <person name="Jones T."/>
            <person name="Federspiel N.A."/>
            <person name="Chibana H."/>
            <person name="Dungan J."/>
            <person name="Kalman S."/>
            <person name="Magee B.B."/>
            <person name="Newport G."/>
            <person name="Thorstenson Y.R."/>
            <person name="Agabian N."/>
            <person name="Magee P.T."/>
            <person name="Davis R.W."/>
            <person name="Scherer S."/>
        </authorList>
    </citation>
    <scope>NUCLEOTIDE SEQUENCE [LARGE SCALE GENOMIC DNA]</scope>
    <source>
        <strain>SC5314 / ATCC MYA-2876</strain>
    </source>
</reference>
<reference key="3">
    <citation type="journal article" date="2007" name="Genome Biol.">
        <title>Assembly of the Candida albicans genome into sixteen supercontigs aligned on the eight chromosomes.</title>
        <authorList>
            <person name="van het Hoog M."/>
            <person name="Rast T.J."/>
            <person name="Martchenko M."/>
            <person name="Grindle S."/>
            <person name="Dignard D."/>
            <person name="Hogues H."/>
            <person name="Cuomo C."/>
            <person name="Berriman M."/>
            <person name="Scherer S."/>
            <person name="Magee B.B."/>
            <person name="Whiteway M."/>
            <person name="Chibana H."/>
            <person name="Nantel A."/>
            <person name="Magee P.T."/>
        </authorList>
    </citation>
    <scope>GENOME REANNOTATION</scope>
    <source>
        <strain>SC5314 / ATCC MYA-2876</strain>
    </source>
</reference>
<reference key="4">
    <citation type="journal article" date="2013" name="Genome Biol.">
        <title>Assembly of a phased diploid Candida albicans genome facilitates allele-specific measurements and provides a simple model for repeat and indel structure.</title>
        <authorList>
            <person name="Muzzey D."/>
            <person name="Schwartz K."/>
            <person name="Weissman J.S."/>
            <person name="Sherlock G."/>
        </authorList>
    </citation>
    <scope>NUCLEOTIDE SEQUENCE [LARGE SCALE GENOMIC DNA]</scope>
    <scope>GENOME REANNOTATION</scope>
    <source>
        <strain>SC5314 / ATCC MYA-2876</strain>
    </source>
</reference>
<reference key="5">
    <citation type="journal article" date="2004" name="Proteomics">
        <title>Proteomics-based identification of novel Candida albicans antigens for diagnosis of systemic candidiasis in patients with underlying hematological malignancies.</title>
        <authorList>
            <person name="Pitarch A."/>
            <person name="Abian J."/>
            <person name="Carrascal M."/>
            <person name="Sanchez M."/>
            <person name="Nombela C."/>
            <person name="Gil C."/>
        </authorList>
    </citation>
    <scope>PROTEIN SEQUENCE OF 47-59; 92-103; 159-173 AND 235-246</scope>
    <scope>SUBCELLULAR LOCATION</scope>
    <scope>ANTIGENICITY</scope>
    <source>
        <strain>SC5314 / ATCC MYA-2876</strain>
        <tissue>Protoplast</tissue>
    </source>
</reference>
<reference key="6">
    <citation type="journal article" date="2010" name="Acta Biochim. Biophys. Sin.">
        <title>Asc1, a WD-repeat protein, is required for hyphal development and virulence in Candida albicans.</title>
        <authorList>
            <person name="Liu X."/>
            <person name="Nie X."/>
            <person name="Ding Y."/>
            <person name="Chen J."/>
        </authorList>
    </citation>
    <scope>FUNCTION</scope>
    <scope>DISRUPTION PHENOTYPE</scope>
</reference>
<reference key="7">
    <citation type="journal article" date="2022" name="Sci. Adv.">
        <title>E-site drug specificity of the human pathogen Candida albicans ribosome.</title>
        <authorList>
            <person name="Zgadzay Y."/>
            <person name="Kolosova O."/>
            <person name="Stetsenko A."/>
            <person name="Wu C."/>
            <person name="Bruchlen D."/>
            <person name="Usachev K."/>
            <person name="Validov S."/>
            <person name="Jenner L."/>
            <person name="Rogachev A."/>
            <person name="Yusupova G."/>
            <person name="Sachs M.S."/>
            <person name="Guskov A."/>
            <person name="Yusupov M."/>
        </authorList>
    </citation>
    <scope>X-RAY CRYSTALLOGRAPHY (2.32 ANGSTROMS) OF THE 80S RIBOSOME</scope>
    <scope>SUBUNIT</scope>
</reference>
<accession>P83774</accession>
<accession>A0A1D8PQU0</accession>
<accession>Q3MPL4</accession>
<accession>Q59S46</accession>
<evidence type="ECO:0000250" key="1">
    <source>
        <dbReference type="UniProtKB" id="P38011"/>
    </source>
</evidence>
<evidence type="ECO:0000255" key="2"/>
<evidence type="ECO:0000269" key="3">
    <source>
    </source>
</evidence>
<evidence type="ECO:0000269" key="4">
    <source>
    </source>
</evidence>
<evidence type="ECO:0000269" key="5">
    <source>
    </source>
</evidence>
<evidence type="ECO:0000303" key="6">
    <source>
    </source>
</evidence>
<evidence type="ECO:0000303" key="7">
    <source>
    </source>
</evidence>
<evidence type="ECO:0000303" key="8">
    <source>
    </source>
</evidence>
<evidence type="ECO:0000305" key="9"/>
<evidence type="ECO:0000305" key="10">
    <source>
    </source>
</evidence>
<name>GBLP_CANAL</name>
<comment type="function">
    <text evidence="1 4 10">Component of the ribosome, a large ribonucleoprotein complex responsible for the synthesis of proteins in the cell. The small ribosomal subunit (SSU) binds messenger RNAs (mRNAs) and translates the encoded message by selecting cognate aminoacyl-transfer RNA (tRNA) molecules. The large subunit (LSU) contains the ribosomal catalytic site termed the peptidyl transferase center (PTC), which catalyzes the formation of peptide bonds, thereby polymerizing the amino acids delivered by tRNAs into a polypeptide chain. The nascent polypeptides leave the ribosome through a tunnel in the LSU and interact with protein factors that function in enzymatic processing, targeting, and the membrane insertion of nascent chains at the exit of the ribosomal tunnel (Probable). Located at the head of the 40S ribosomal subunit in the vicinity of the mRNA exit channel, it serves as a scaffold protein that can recruit other proteins to the ribosome (By similarity). Involved in the negative regulation of translation of a specific subset of proteins (By similarity). Plays a role in morphogenesis and pathogenesis (PubMed:20929924).</text>
</comment>
<comment type="subunit">
    <text evidence="5">Component of the small ribosomal subunit (PubMed:35613268). Mature ribosomes consist of a small (40S) and a large (60S) subunit (PubMed:35613268). The 40S subunit contains about 32 different proteins and 1 molecule of RNA (18S) (PubMed:35613268). The 60S subunit contains 45 different proteins and 3 molecules of RNA (25S, 5.8S and 5S) (PubMed:35613268).</text>
</comment>
<comment type="subcellular location">
    <subcellularLocation>
        <location evidence="3">Cytoplasm</location>
    </subcellularLocation>
</comment>
<comment type="disruption phenotype">
    <text evidence="4">Causes defects in hyphal development under hypha-inducing conditions and attenuates virulence in a mouse model of systemic infection.</text>
</comment>
<comment type="miscellaneous">
    <text evidence="3">Has antigenic properties. Elicits a specific immune response in systemic candidiasis human patients undergoing malignant hematological disorders.</text>
</comment>
<comment type="similarity">
    <text evidence="9">Belongs to the WD repeat G protein beta family. Ribosomal protein RACK1 subfamily.</text>
</comment>
<comment type="sequence caution" evidence="9">
    <conflict type="erroneous gene model prediction">
        <sequence resource="EMBL-CDS" id="BAE44646"/>
    </conflict>
</comment>
<protein>
    <recommendedName>
        <fullName evidence="8">Small ribosomal subunit protein RACK1</fullName>
    </recommendedName>
    <alternativeName>
        <fullName>40S ribosomal protein ASC1</fullName>
    </alternativeName>
    <alternativeName>
        <fullName evidence="7">Absence of growth suppressor of Cyp1 protein 1</fullName>
    </alternativeName>
    <alternativeName>
        <fullName evidence="6">Cytoplasmic antigenic protein 1</fullName>
    </alternativeName>
    <alternativeName>
        <fullName evidence="1">Guanine nucleotide-binding protein subunit beta-like protein</fullName>
    </alternativeName>
</protein>
<gene>
    <name evidence="7" type="primary">ASC1</name>
    <name type="ordered locus">CAALFM_C701250WA</name>
    <name type="ORF">CaJ7.0140</name>
    <name type="ORF">CaO19.6906</name>
</gene>
<organism>
    <name type="scientific">Candida albicans (strain SC5314 / ATCC MYA-2876)</name>
    <name type="common">Yeast</name>
    <dbReference type="NCBI Taxonomy" id="237561"/>
    <lineage>
        <taxon>Eukaryota</taxon>
        <taxon>Fungi</taxon>
        <taxon>Dikarya</taxon>
        <taxon>Ascomycota</taxon>
        <taxon>Saccharomycotina</taxon>
        <taxon>Pichiomycetes</taxon>
        <taxon>Debaryomycetaceae</taxon>
        <taxon>Candida/Lodderomyces clade</taxon>
        <taxon>Candida</taxon>
    </lineage>
</organism>
<feature type="chain" id="PRO_0000089300" description="Small ribosomal subunit protein RACK1">
    <location>
        <begin position="1"/>
        <end position="317"/>
    </location>
</feature>
<feature type="repeat" description="WD 1" evidence="2">
    <location>
        <begin position="15"/>
        <end position="55"/>
    </location>
</feature>
<feature type="repeat" description="WD 2" evidence="2">
    <location>
        <begin position="64"/>
        <end position="103"/>
    </location>
</feature>
<feature type="repeat" description="WD 3" evidence="2">
    <location>
        <begin position="106"/>
        <end position="146"/>
    </location>
</feature>
<feature type="repeat" description="WD 4" evidence="2">
    <location>
        <begin position="148"/>
        <end position="188"/>
    </location>
</feature>
<feature type="repeat" description="WD 5" evidence="2">
    <location>
        <begin position="191"/>
        <end position="230"/>
    </location>
</feature>
<feature type="repeat" description="WD 6" evidence="2">
    <location>
        <begin position="232"/>
        <end position="272"/>
    </location>
</feature>
<feature type="repeat" description="WD 7" evidence="2">
    <location>
        <begin position="281"/>
        <end position="317"/>
    </location>
</feature>
<keyword id="KW-0002">3D-structure</keyword>
<keyword id="KW-0963">Cytoplasm</keyword>
<keyword id="KW-0903">Direct protein sequencing</keyword>
<keyword id="KW-1185">Reference proteome</keyword>
<keyword id="KW-0677">Repeat</keyword>
<keyword id="KW-0687">Ribonucleoprotein</keyword>
<keyword id="KW-0689">Ribosomal protein</keyword>
<keyword id="KW-0853">WD repeat</keyword>
<dbReference type="EMBL" id="AP006852">
    <property type="protein sequence ID" value="BAE44646.1"/>
    <property type="status" value="ALT_SEQ"/>
    <property type="molecule type" value="Genomic_DNA"/>
</dbReference>
<dbReference type="EMBL" id="CP017629">
    <property type="protein sequence ID" value="AOW30494.1"/>
    <property type="molecule type" value="Genomic_DNA"/>
</dbReference>
<dbReference type="RefSeq" id="XP_019331027.1">
    <property type="nucleotide sequence ID" value="XM_019475482.1"/>
</dbReference>
<dbReference type="PDB" id="7PZY">
    <property type="method" value="EM"/>
    <property type="resolution" value="2.32 A"/>
    <property type="chains" value="h=1-317"/>
</dbReference>
<dbReference type="PDB" id="7Q08">
    <property type="method" value="EM"/>
    <property type="resolution" value="2.56 A"/>
    <property type="chains" value="h=1-317"/>
</dbReference>
<dbReference type="PDB" id="7Q0F">
    <property type="method" value="EM"/>
    <property type="resolution" value="2.64 A"/>
    <property type="chains" value="h=1-317"/>
</dbReference>
<dbReference type="PDB" id="7Q0P">
    <property type="method" value="EM"/>
    <property type="resolution" value="2.77 A"/>
    <property type="chains" value="h=1-317"/>
</dbReference>
<dbReference type="PDB" id="7Q0R">
    <property type="method" value="EM"/>
    <property type="resolution" value="2.67 A"/>
    <property type="chains" value="h=1-317"/>
</dbReference>
<dbReference type="PDB" id="8C3A">
    <property type="method" value="X-ray"/>
    <property type="resolution" value="3.00 A"/>
    <property type="chains" value="AR/DT=1-317"/>
</dbReference>
<dbReference type="PDB" id="8OGJ">
    <property type="method" value="EM"/>
    <property type="resolution" value="3.10 A"/>
    <property type="chains" value="h=1-317"/>
</dbReference>
<dbReference type="PDB" id="8OH6">
    <property type="method" value="X-ray"/>
    <property type="resolution" value="3.35 A"/>
    <property type="chains" value="AR/DT=1-317"/>
</dbReference>
<dbReference type="PDB" id="8OI5">
    <property type="method" value="X-ray"/>
    <property type="resolution" value="2.90 A"/>
    <property type="chains" value="AR=1-317"/>
</dbReference>
<dbReference type="PDB" id="8OJ3">
    <property type="method" value="X-ray"/>
    <property type="resolution" value="3.50 A"/>
    <property type="chains" value="AR/DT=1-317"/>
</dbReference>
<dbReference type="PDBsum" id="7PZY"/>
<dbReference type="PDBsum" id="7Q08"/>
<dbReference type="PDBsum" id="7Q0F"/>
<dbReference type="PDBsum" id="7Q0P"/>
<dbReference type="PDBsum" id="7Q0R"/>
<dbReference type="PDBsum" id="8C3A"/>
<dbReference type="PDBsum" id="8OGJ"/>
<dbReference type="PDBsum" id="8OH6"/>
<dbReference type="PDBsum" id="8OI5"/>
<dbReference type="PDBsum" id="8OJ3"/>
<dbReference type="EMDB" id="EMD-13737"/>
<dbReference type="EMDB" id="EMD-13741"/>
<dbReference type="EMDB" id="EMD-13744"/>
<dbReference type="EMDB" id="EMD-13749"/>
<dbReference type="EMDB" id="EMD-13750"/>
<dbReference type="EMDB" id="EMD-16874"/>
<dbReference type="SMR" id="P83774"/>
<dbReference type="BioGRID" id="1229000">
    <property type="interactions" value="4"/>
</dbReference>
<dbReference type="FunCoup" id="P83774">
    <property type="interactions" value="1445"/>
</dbReference>
<dbReference type="STRING" id="237561.P83774"/>
<dbReference type="EnsemblFungi" id="C7_01250W_A-T">
    <property type="protein sequence ID" value="C7_01250W_A-T-p1"/>
    <property type="gene ID" value="C7_01250W_A"/>
</dbReference>
<dbReference type="GeneID" id="3645907"/>
<dbReference type="KEGG" id="cal:CAALFM_C701250WA"/>
<dbReference type="CGD" id="CAL0000180554">
    <property type="gene designation" value="ASC1"/>
</dbReference>
<dbReference type="VEuPathDB" id="FungiDB:C7_01250W_A"/>
<dbReference type="eggNOG" id="KOG0279">
    <property type="taxonomic scope" value="Eukaryota"/>
</dbReference>
<dbReference type="HOGENOM" id="CLU_000288_57_7_1"/>
<dbReference type="InParanoid" id="P83774"/>
<dbReference type="OMA" id="NCKLKIN"/>
<dbReference type="OrthoDB" id="7875889at2759"/>
<dbReference type="PHI-base" id="PHI:3514"/>
<dbReference type="Proteomes" id="UP000000559">
    <property type="component" value="Chromosome 7"/>
</dbReference>
<dbReference type="GO" id="GO:0005829">
    <property type="term" value="C:cytosol"/>
    <property type="evidence" value="ECO:0000318"/>
    <property type="project" value="GO_Central"/>
</dbReference>
<dbReference type="GO" id="GO:0022627">
    <property type="term" value="C:cytosolic small ribosomal subunit"/>
    <property type="evidence" value="ECO:0007669"/>
    <property type="project" value="EnsemblFungi"/>
</dbReference>
<dbReference type="GO" id="GO:1903561">
    <property type="term" value="C:extracellular vesicle"/>
    <property type="evidence" value="ECO:0000314"/>
    <property type="project" value="CGD"/>
</dbReference>
<dbReference type="GO" id="GO:0005634">
    <property type="term" value="C:nucleus"/>
    <property type="evidence" value="ECO:0000318"/>
    <property type="project" value="GO_Central"/>
</dbReference>
<dbReference type="GO" id="GO:0001965">
    <property type="term" value="F:G-protein alpha-subunit binding"/>
    <property type="evidence" value="ECO:0007669"/>
    <property type="project" value="EnsemblFungi"/>
</dbReference>
<dbReference type="GO" id="GO:0005092">
    <property type="term" value="F:GDP-dissociation inhibitor activity"/>
    <property type="evidence" value="ECO:0000316"/>
    <property type="project" value="CGD"/>
</dbReference>
<dbReference type="GO" id="GO:0005080">
    <property type="term" value="F:protein kinase C binding"/>
    <property type="evidence" value="ECO:0000318"/>
    <property type="project" value="GO_Central"/>
</dbReference>
<dbReference type="GO" id="GO:0043495">
    <property type="term" value="F:protein-membrane adaptor activity"/>
    <property type="evidence" value="ECO:0007669"/>
    <property type="project" value="EnsemblFungi"/>
</dbReference>
<dbReference type="GO" id="GO:0043022">
    <property type="term" value="F:ribosome binding"/>
    <property type="evidence" value="ECO:0000318"/>
    <property type="project" value="GO_Central"/>
</dbReference>
<dbReference type="GO" id="GO:0030546">
    <property type="term" value="F:signaling receptor activator activity"/>
    <property type="evidence" value="ECO:0007669"/>
    <property type="project" value="EnsemblFungi"/>
</dbReference>
<dbReference type="GO" id="GO:0003735">
    <property type="term" value="F:structural constituent of ribosome"/>
    <property type="evidence" value="ECO:0007669"/>
    <property type="project" value="EnsemblFungi"/>
</dbReference>
<dbReference type="GO" id="GO:0045182">
    <property type="term" value="F:translation regulator activity"/>
    <property type="evidence" value="ECO:0007669"/>
    <property type="project" value="InterPro"/>
</dbReference>
<dbReference type="GO" id="GO:0007155">
    <property type="term" value="P:cell adhesion"/>
    <property type="evidence" value="ECO:0000315"/>
    <property type="project" value="CGD"/>
</dbReference>
<dbReference type="GO" id="GO:0036244">
    <property type="term" value="P:cellular response to neutral pH"/>
    <property type="evidence" value="ECO:0000315"/>
    <property type="project" value="CGD"/>
</dbReference>
<dbReference type="GO" id="GO:0009267">
    <property type="term" value="P:cellular response to starvation"/>
    <property type="evidence" value="ECO:0000315"/>
    <property type="project" value="CGD"/>
</dbReference>
<dbReference type="GO" id="GO:0030447">
    <property type="term" value="P:filamentous growth"/>
    <property type="evidence" value="ECO:0000315"/>
    <property type="project" value="CGD"/>
</dbReference>
<dbReference type="GO" id="GO:0036180">
    <property type="term" value="P:filamentous growth of a population of unicellular organisms in response to biotic stimulus"/>
    <property type="evidence" value="ECO:0000315"/>
    <property type="project" value="CGD"/>
</dbReference>
<dbReference type="GO" id="GO:0036178">
    <property type="term" value="P:filamentous growth of a population of unicellular organisms in response to neutral pH"/>
    <property type="evidence" value="ECO:0000315"/>
    <property type="project" value="CGD"/>
</dbReference>
<dbReference type="GO" id="GO:0036170">
    <property type="term" value="P:filamentous growth of a population of unicellular organisms in response to starvation"/>
    <property type="evidence" value="ECO:0000315"/>
    <property type="project" value="CGD"/>
</dbReference>
<dbReference type="GO" id="GO:0007186">
    <property type="term" value="P:G protein-coupled receptor signaling pathway"/>
    <property type="evidence" value="ECO:0000316"/>
    <property type="project" value="CGD"/>
</dbReference>
<dbReference type="GO" id="GO:0140469">
    <property type="term" value="P:GCN2-mediated signaling"/>
    <property type="evidence" value="ECO:0007669"/>
    <property type="project" value="EnsemblFungi"/>
</dbReference>
<dbReference type="GO" id="GO:0001403">
    <property type="term" value="P:invasive growth in response to glucose limitation"/>
    <property type="evidence" value="ECO:0000315"/>
    <property type="project" value="CGD"/>
</dbReference>
<dbReference type="GO" id="GO:1990145">
    <property type="term" value="P:maintenance of translational fidelity"/>
    <property type="evidence" value="ECO:0007669"/>
    <property type="project" value="EnsemblFungi"/>
</dbReference>
<dbReference type="GO" id="GO:0061157">
    <property type="term" value="P:mRNA destabilization"/>
    <property type="evidence" value="ECO:0007669"/>
    <property type="project" value="EnsemblFungi"/>
</dbReference>
<dbReference type="GO" id="GO:1903138">
    <property type="term" value="P:negative regulation of cell integrity MAPK cascade"/>
    <property type="evidence" value="ECO:0007669"/>
    <property type="project" value="EnsemblFungi"/>
</dbReference>
<dbReference type="GO" id="GO:1902660">
    <property type="term" value="P:negative regulation of glucose mediated signaling pathway"/>
    <property type="evidence" value="ECO:0007669"/>
    <property type="project" value="EnsemblFungi"/>
</dbReference>
<dbReference type="GO" id="GO:1903753">
    <property type="term" value="P:negative regulation of p38MAPK cascade"/>
    <property type="evidence" value="ECO:0007669"/>
    <property type="project" value="EnsemblFungi"/>
</dbReference>
<dbReference type="GO" id="GO:2001125">
    <property type="term" value="P:negative regulation of translational frameshifting"/>
    <property type="evidence" value="ECO:0000318"/>
    <property type="project" value="GO_Central"/>
</dbReference>
<dbReference type="GO" id="GO:0070651">
    <property type="term" value="P:nonfunctional rRNA decay"/>
    <property type="evidence" value="ECO:0007669"/>
    <property type="project" value="EnsemblFungi"/>
</dbReference>
<dbReference type="GO" id="GO:0010508">
    <property type="term" value="P:positive regulation of autophagy"/>
    <property type="evidence" value="ECO:0007669"/>
    <property type="project" value="EnsemblFungi"/>
</dbReference>
<dbReference type="GO" id="GO:0031139">
    <property type="term" value="P:positive regulation of conjugation with cellular fusion"/>
    <property type="evidence" value="ECO:0007669"/>
    <property type="project" value="EnsemblFungi"/>
</dbReference>
<dbReference type="GO" id="GO:0006521">
    <property type="term" value="P:regulation of amino acid metabolic process"/>
    <property type="evidence" value="ECO:0007669"/>
    <property type="project" value="EnsemblFungi"/>
</dbReference>
<dbReference type="GO" id="GO:2000765">
    <property type="term" value="P:regulation of cytoplasmic translation"/>
    <property type="evidence" value="ECO:0007669"/>
    <property type="project" value="EnsemblFungi"/>
</dbReference>
<dbReference type="GO" id="GO:0072344">
    <property type="term" value="P:rescue of stalled ribosome"/>
    <property type="evidence" value="ECO:0000318"/>
    <property type="project" value="GO_Central"/>
</dbReference>
<dbReference type="GO" id="GO:0141014">
    <property type="term" value="P:ribosome hibernation"/>
    <property type="evidence" value="ECO:0007669"/>
    <property type="project" value="EnsemblFungi"/>
</dbReference>
<dbReference type="GO" id="GO:1990116">
    <property type="term" value="P:ribosome-associated ubiquitin-dependent protein catabolic process"/>
    <property type="evidence" value="ECO:0007669"/>
    <property type="project" value="EnsemblFungi"/>
</dbReference>
<dbReference type="CDD" id="cd00200">
    <property type="entry name" value="WD40"/>
    <property type="match status" value="1"/>
</dbReference>
<dbReference type="FunFam" id="2.130.10.10:FF:000039">
    <property type="entry name" value="Guanine nucleotide-binding protein subunit beta-like protein"/>
    <property type="match status" value="1"/>
</dbReference>
<dbReference type="Gene3D" id="2.130.10.10">
    <property type="entry name" value="YVTN repeat-like/Quinoprotein amine dehydrogenase"/>
    <property type="match status" value="1"/>
</dbReference>
<dbReference type="InterPro" id="IPR020472">
    <property type="entry name" value="G-protein_beta_WD-40_rep"/>
</dbReference>
<dbReference type="InterPro" id="IPR045223">
    <property type="entry name" value="RACK1-like"/>
</dbReference>
<dbReference type="InterPro" id="IPR015943">
    <property type="entry name" value="WD40/YVTN_repeat-like_dom_sf"/>
</dbReference>
<dbReference type="InterPro" id="IPR019775">
    <property type="entry name" value="WD40_repeat_CS"/>
</dbReference>
<dbReference type="InterPro" id="IPR036322">
    <property type="entry name" value="WD40_repeat_dom_sf"/>
</dbReference>
<dbReference type="InterPro" id="IPR001680">
    <property type="entry name" value="WD40_rpt"/>
</dbReference>
<dbReference type="PANTHER" id="PTHR19868">
    <property type="entry name" value="RECEPTOR FOR ACTIVATED PROTEIN KINASE C RACK1"/>
    <property type="match status" value="1"/>
</dbReference>
<dbReference type="Pfam" id="PF00400">
    <property type="entry name" value="WD40"/>
    <property type="match status" value="7"/>
</dbReference>
<dbReference type="PRINTS" id="PR00320">
    <property type="entry name" value="GPROTEINBRPT"/>
</dbReference>
<dbReference type="SMART" id="SM00320">
    <property type="entry name" value="WD40"/>
    <property type="match status" value="7"/>
</dbReference>
<dbReference type="SUPFAM" id="SSF50978">
    <property type="entry name" value="WD40 repeat-like"/>
    <property type="match status" value="1"/>
</dbReference>
<dbReference type="PROSITE" id="PS00678">
    <property type="entry name" value="WD_REPEATS_1"/>
    <property type="match status" value="4"/>
</dbReference>
<dbReference type="PROSITE" id="PS50082">
    <property type="entry name" value="WD_REPEATS_2"/>
    <property type="match status" value="6"/>
</dbReference>
<dbReference type="PROSITE" id="PS50294">
    <property type="entry name" value="WD_REPEATS_REGION"/>
    <property type="match status" value="1"/>
</dbReference>
<sequence length="317" mass="34555">MADQEVLVLRGTLEGHNGWVTSLATTPAHPDLLLSGSRDKTLIKWKLTGGEDNQYGIPKKSFKGHSHIVQDVTISADGAYALSASWDRTLRLWDLETGETTQRFVGHKGDVLSVSIAKNLRQIVSASRDKTVKVWNTIGECMATLTGHNDWVSAVRISPSDQSSTVISASWDKTVKSWDLADYSVNADFIGHTGYISCITLSPDGSLCASAGKDGVIILWDLNKNKTLYTLEAKAEVHALAFSPNRYWLAAATTSGIKIFKLQERSLLDELKPEFAVGATAKDPEAISLAWSADGQNLFAGYTDNVIRVWQVMTPSA</sequence>